<proteinExistence type="evidence at protein level"/>
<comment type="function">
    <text>In addition to polymerase activity, this DNA polymerase exhibits 3'-5' and 5'-3' exonuclease activity.</text>
</comment>
<comment type="catalytic activity">
    <reaction>
        <text>DNA(n) + a 2'-deoxyribonucleoside 5'-triphosphate = DNA(n+1) + diphosphate</text>
        <dbReference type="Rhea" id="RHEA:22508"/>
        <dbReference type="Rhea" id="RHEA-COMP:17339"/>
        <dbReference type="Rhea" id="RHEA-COMP:17340"/>
        <dbReference type="ChEBI" id="CHEBI:33019"/>
        <dbReference type="ChEBI" id="CHEBI:61560"/>
        <dbReference type="ChEBI" id="CHEBI:173112"/>
        <dbReference type="EC" id="2.7.7.7"/>
    </reaction>
</comment>
<comment type="subunit">
    <text>Single-chain monomer with multiple functions.</text>
</comment>
<comment type="similarity">
    <text evidence="2">Belongs to the DNA polymerase type-A family.</text>
</comment>
<dbReference type="EC" id="2.7.7.7"/>
<dbReference type="EMBL" id="D12982">
    <property type="protein sequence ID" value="BAA02361.1"/>
    <property type="molecule type" value="Genomic_DNA"/>
</dbReference>
<dbReference type="PIR" id="JX0256">
    <property type="entry name" value="JX0256"/>
</dbReference>
<dbReference type="PDB" id="2HHX">
    <property type="method" value="X-ray"/>
    <property type="resolution" value="2.26 A"/>
    <property type="chains" value="A=298-877"/>
</dbReference>
<dbReference type="PDBsum" id="2HHX"/>
<dbReference type="SMR" id="Q04957"/>
<dbReference type="GO" id="GO:0008408">
    <property type="term" value="F:3'-5' exonuclease activity"/>
    <property type="evidence" value="ECO:0007669"/>
    <property type="project" value="InterPro"/>
</dbReference>
<dbReference type="GO" id="GO:0008409">
    <property type="term" value="F:5'-3' exonuclease activity"/>
    <property type="evidence" value="ECO:0007669"/>
    <property type="project" value="InterPro"/>
</dbReference>
<dbReference type="GO" id="GO:0003677">
    <property type="term" value="F:DNA binding"/>
    <property type="evidence" value="ECO:0007669"/>
    <property type="project" value="UniProtKB-KW"/>
</dbReference>
<dbReference type="GO" id="GO:0003887">
    <property type="term" value="F:DNA-directed DNA polymerase activity"/>
    <property type="evidence" value="ECO:0007669"/>
    <property type="project" value="UniProtKB-KW"/>
</dbReference>
<dbReference type="GO" id="GO:0006261">
    <property type="term" value="P:DNA-templated DNA replication"/>
    <property type="evidence" value="ECO:0007669"/>
    <property type="project" value="InterPro"/>
</dbReference>
<dbReference type="GO" id="GO:0006302">
    <property type="term" value="P:double-strand break repair"/>
    <property type="evidence" value="ECO:0007669"/>
    <property type="project" value="TreeGrafter"/>
</dbReference>
<dbReference type="CDD" id="cd08637">
    <property type="entry name" value="DNA_pol_A_pol_I_C"/>
    <property type="match status" value="1"/>
</dbReference>
<dbReference type="CDD" id="cd06128">
    <property type="entry name" value="DNA_polA_exo"/>
    <property type="match status" value="1"/>
</dbReference>
<dbReference type="CDD" id="cd09898">
    <property type="entry name" value="H3TH_53EXO"/>
    <property type="match status" value="1"/>
</dbReference>
<dbReference type="CDD" id="cd09859">
    <property type="entry name" value="PIN_53EXO"/>
    <property type="match status" value="1"/>
</dbReference>
<dbReference type="FunFam" id="1.10.150.20:FF:000002">
    <property type="entry name" value="DNA polymerase I"/>
    <property type="match status" value="1"/>
</dbReference>
<dbReference type="FunFam" id="1.10.150.20:FF:000003">
    <property type="entry name" value="DNA polymerase I"/>
    <property type="match status" value="1"/>
</dbReference>
<dbReference type="FunFam" id="1.20.1060.10:FF:000001">
    <property type="entry name" value="DNA polymerase I"/>
    <property type="match status" value="1"/>
</dbReference>
<dbReference type="FunFam" id="3.40.50.1010:FF:000001">
    <property type="entry name" value="DNA polymerase I"/>
    <property type="match status" value="1"/>
</dbReference>
<dbReference type="Gene3D" id="3.30.70.370">
    <property type="match status" value="1"/>
</dbReference>
<dbReference type="Gene3D" id="1.10.150.20">
    <property type="entry name" value="5' to 3' exonuclease, C-terminal subdomain"/>
    <property type="match status" value="2"/>
</dbReference>
<dbReference type="Gene3D" id="3.40.50.1010">
    <property type="entry name" value="5'-nuclease"/>
    <property type="match status" value="1"/>
</dbReference>
<dbReference type="Gene3D" id="3.30.420.10">
    <property type="entry name" value="Ribonuclease H-like superfamily/Ribonuclease H"/>
    <property type="match status" value="1"/>
</dbReference>
<dbReference type="Gene3D" id="1.20.1060.10">
    <property type="entry name" value="Taq DNA Polymerase, Chain T, domain 4"/>
    <property type="match status" value="1"/>
</dbReference>
<dbReference type="InterPro" id="IPR002562">
    <property type="entry name" value="3'-5'_exonuclease_dom"/>
</dbReference>
<dbReference type="InterPro" id="IPR020046">
    <property type="entry name" value="5-3_exonucl_a-hlix_arch_N"/>
</dbReference>
<dbReference type="InterPro" id="IPR002421">
    <property type="entry name" value="5-3_exonuclease"/>
</dbReference>
<dbReference type="InterPro" id="IPR036279">
    <property type="entry name" value="5-3_exonuclease_C_sf"/>
</dbReference>
<dbReference type="InterPro" id="IPR019760">
    <property type="entry name" value="DNA-dir_DNA_pol_A_CS"/>
</dbReference>
<dbReference type="InterPro" id="IPR001098">
    <property type="entry name" value="DNA-dir_DNA_pol_A_palm_dom"/>
</dbReference>
<dbReference type="InterPro" id="IPR043502">
    <property type="entry name" value="DNA/RNA_pol_sf"/>
</dbReference>
<dbReference type="InterPro" id="IPR054690">
    <property type="entry name" value="DNA_polI_exonuclease"/>
</dbReference>
<dbReference type="InterPro" id="IPR020045">
    <property type="entry name" value="DNA_polI_H3TH"/>
</dbReference>
<dbReference type="InterPro" id="IPR018320">
    <property type="entry name" value="DNA_polymerase_1"/>
</dbReference>
<dbReference type="InterPro" id="IPR002298">
    <property type="entry name" value="DNA_polymerase_A"/>
</dbReference>
<dbReference type="InterPro" id="IPR008918">
    <property type="entry name" value="HhH2"/>
</dbReference>
<dbReference type="InterPro" id="IPR029060">
    <property type="entry name" value="PIN-like_dom_sf"/>
</dbReference>
<dbReference type="InterPro" id="IPR012337">
    <property type="entry name" value="RNaseH-like_sf"/>
</dbReference>
<dbReference type="InterPro" id="IPR036397">
    <property type="entry name" value="RNaseH_sf"/>
</dbReference>
<dbReference type="NCBIfam" id="TIGR00593">
    <property type="entry name" value="pola"/>
    <property type="match status" value="1"/>
</dbReference>
<dbReference type="NCBIfam" id="NF004397">
    <property type="entry name" value="PRK05755.1"/>
    <property type="match status" value="1"/>
</dbReference>
<dbReference type="PANTHER" id="PTHR10133">
    <property type="entry name" value="DNA POLYMERASE I"/>
    <property type="match status" value="1"/>
</dbReference>
<dbReference type="PANTHER" id="PTHR10133:SF27">
    <property type="entry name" value="DNA POLYMERASE NU"/>
    <property type="match status" value="1"/>
</dbReference>
<dbReference type="Pfam" id="PF01367">
    <property type="entry name" value="5_3_exonuc"/>
    <property type="match status" value="1"/>
</dbReference>
<dbReference type="Pfam" id="PF02739">
    <property type="entry name" value="5_3_exonuc_N"/>
    <property type="match status" value="1"/>
</dbReference>
<dbReference type="Pfam" id="PF00476">
    <property type="entry name" value="DNA_pol_A"/>
    <property type="match status" value="1"/>
</dbReference>
<dbReference type="Pfam" id="PF22619">
    <property type="entry name" value="DNA_polI_exo1"/>
    <property type="match status" value="1"/>
</dbReference>
<dbReference type="PRINTS" id="PR00868">
    <property type="entry name" value="DNAPOLI"/>
</dbReference>
<dbReference type="SMART" id="SM00474">
    <property type="entry name" value="35EXOc"/>
    <property type="match status" value="1"/>
</dbReference>
<dbReference type="SMART" id="SM00475">
    <property type="entry name" value="53EXOc"/>
    <property type="match status" value="1"/>
</dbReference>
<dbReference type="SMART" id="SM00279">
    <property type="entry name" value="HhH2"/>
    <property type="match status" value="1"/>
</dbReference>
<dbReference type="SMART" id="SM00482">
    <property type="entry name" value="POLAc"/>
    <property type="match status" value="1"/>
</dbReference>
<dbReference type="SUPFAM" id="SSF47807">
    <property type="entry name" value="5' to 3' exonuclease, C-terminal subdomain"/>
    <property type="match status" value="1"/>
</dbReference>
<dbReference type="SUPFAM" id="SSF56672">
    <property type="entry name" value="DNA/RNA polymerases"/>
    <property type="match status" value="1"/>
</dbReference>
<dbReference type="SUPFAM" id="SSF88723">
    <property type="entry name" value="PIN domain-like"/>
    <property type="match status" value="1"/>
</dbReference>
<dbReference type="SUPFAM" id="SSF53098">
    <property type="entry name" value="Ribonuclease H-like"/>
    <property type="match status" value="1"/>
</dbReference>
<dbReference type="PROSITE" id="PS00447">
    <property type="entry name" value="DNA_POLYMERASE_A"/>
    <property type="match status" value="1"/>
</dbReference>
<sequence>MKKKLVLIDGSSVAYRAFFALPLLHNDKGIHTNAVYGFTMMLNKILAEEEPTHMLVAFDAGKTTFRHEAFQEYKGGRQQTPPELSEQFPLLRELLRAYRIPAYELENYEADDIIGTLAARAEQEGFEVKVISGDRDLTQLASPHVTVDITKKGITDIEPYTPEAVREKYGLTPEQIVDLKGLMGDKSDNIPGVPGIGEKTAVKLLRQFGTVENVLASIDEIKGEKLKETLRQHREMALLSKKLAAIRRDAPVELSLDDIAYQGEDREKVVALFKELGFQSFLEKMESPSSEEEKPLAKMAFTLADRVTEEMLADKAALVVEVVEENYHDAPIVGIAVVNEHGRFFLRPETALADPQFVAWLGDETKKKSMFDSKRAAVALKWKGIELCGVSFDLLLAAYLLDPAQGVDDVAAAAKMKQYEAVRPDEAVYGKGAKRAVPDEPVLAEHLVRKAAAIWALERPFLDELRRNEQDRLLVELEQPLSSILAEMEFAGVKVDTKRLEQMGEELAEQLRTVEQRIYELAGQEFNINSPKQLGVILFEKLQLPVLKKSKTGYSTSADVLEKLAPYHEIVENILQHYRQLGKLQSTYIEGLLKVVRPDTKKVHTIFNQALTQTGRLSSTEPNLQNIPIRLEEGRKIRQAFVPSESDWLIFAADYSQIELRVLAHIAEDDNLMEAFRRDLDIHTKTAMDIFQVSEDEVTPNMRRQAKAVNFGIVYGISDYGLAQNLNISRKEAAEFIERYFESFPGVKRYMENIVQEAKQKGYVTTLLHRRRYLPDITSRNFNVRSFAERMAMNTPIQGSAADIIKKAMIDLNARLKEERLQARLLLQVHDELILEAPKEEMERLCRLVPEVMEQAVTLRVPLKVDYHYGSTWYDAK</sequence>
<name>DPO1_BACCA</name>
<accession>Q04957</accession>
<evidence type="ECO:0000250" key="1"/>
<evidence type="ECO:0000305" key="2"/>
<feature type="chain" id="PRO_0000101233" description="DNA polymerase I">
    <location>
        <begin position="1"/>
        <end position="877"/>
    </location>
</feature>
<feature type="domain" description="5'-3' exonuclease">
    <location>
        <begin position="1"/>
        <end position="310"/>
    </location>
</feature>
<feature type="domain" description="3'-5' exonuclease">
    <location>
        <begin position="311"/>
        <end position="465"/>
    </location>
</feature>
<feature type="region of interest" description="Polymerase" evidence="1">
    <location>
        <begin position="469"/>
        <end position="877"/>
    </location>
</feature>
<keyword id="KW-0002">3D-structure</keyword>
<keyword id="KW-0903">Direct protein sequencing</keyword>
<keyword id="KW-0227">DNA damage</keyword>
<keyword id="KW-0234">DNA repair</keyword>
<keyword id="KW-0235">DNA replication</keyword>
<keyword id="KW-0238">DNA-binding</keyword>
<keyword id="KW-0239">DNA-directed DNA polymerase</keyword>
<keyword id="KW-0269">Exonuclease</keyword>
<keyword id="KW-0378">Hydrolase</keyword>
<keyword id="KW-0540">Nuclease</keyword>
<keyword id="KW-0548">Nucleotidyltransferase</keyword>
<keyword id="KW-0808">Transferase</keyword>
<organism>
    <name type="scientific">Bacillus caldotenax</name>
    <dbReference type="NCBI Taxonomy" id="1395"/>
    <lineage>
        <taxon>Bacteria</taxon>
        <taxon>Bacillati</taxon>
        <taxon>Bacillota</taxon>
        <taxon>Bacilli</taxon>
        <taxon>Bacillales</taxon>
        <taxon>Anoxybacillaceae</taxon>
        <taxon>Geobacillus</taxon>
        <taxon>Geobacillus thermoleovorans group</taxon>
    </lineage>
</organism>
<protein>
    <recommendedName>
        <fullName>DNA polymerase I</fullName>
        <shortName>POL I</shortName>
        <ecNumber>2.7.7.7</ecNumber>
    </recommendedName>
</protein>
<gene>
    <name type="primary">polA</name>
</gene>
<reference key="1">
    <citation type="journal article" date="1993" name="J. Biochem.">
        <title>Cloning of the DNA polymerase gene of Bacillus caldotenax and characterization of the gene product.</title>
        <authorList>
            <person name="Uemori T."/>
            <person name="Ishino Y."/>
            <person name="Fujita K."/>
            <person name="Asada K."/>
            <person name="Kato I."/>
        </authorList>
    </citation>
    <scope>NUCLEOTIDE SEQUENCE [GENOMIC DNA]</scope>
    <scope>PROTEIN SEQUENCE OF 1-15</scope>
</reference>